<sequence length="466" mass="53975">MNRVSISDIYKDDIIVNSLITVCGWVRNRRSSKSGFSFITIYDGSCFNSIQVIANNTLPNYYKEILHLTTGCSVMLSGKLILSIGDKQKYEIQLKKIKVLGWVENPETYPISSKKHSTEYLREVAHLRSRTNLIGAIARIRNYILHSLHHFFYKEKYYWVPTPIITSLNTEGAGEMFRVSTLDMENIPKNLDSSVDFKKDFFGKESFLTVSGQLNLETYACSLSKVYTFGPTFRAENSNTGRHLAEFWMLEVESAFTDLNDISDFAECMLKYVCKSLLKKCITDINFLENYTNSNIVDRLEKFLLVDFVRIDYVEVINILLDSKIKFNNSVFLGIDLSSEHERFLVENYFKIPVIVKNYPKELKAFYMRLNNDKKTVAAIDILVPNVGELIGGSQREERIAILDERLLELGLKKEDYWWYRDLRRYGTVPHSGFGMGFERLISYFTGITNIRDLIPFPRTVNNAYF</sequence>
<reference key="1">
    <citation type="journal article" date="2000" name="Nature">
        <title>Genome sequence of the endocellular bacterial symbiont of aphids Buchnera sp. APS.</title>
        <authorList>
            <person name="Shigenobu S."/>
            <person name="Watanabe H."/>
            <person name="Hattori M."/>
            <person name="Sakaki Y."/>
            <person name="Ishikawa H."/>
        </authorList>
    </citation>
    <scope>NUCLEOTIDE SEQUENCE [LARGE SCALE GENOMIC DNA]</scope>
    <source>
        <strain>APS</strain>
    </source>
</reference>
<feature type="chain" id="PRO_0000176397" description="Asparagine--tRNA ligase">
    <location>
        <begin position="1"/>
        <end position="466"/>
    </location>
</feature>
<gene>
    <name evidence="1" type="primary">asnS</name>
    <name type="ordered locus">BU360</name>
</gene>
<accession>P57441</accession>
<evidence type="ECO:0000255" key="1">
    <source>
        <dbReference type="HAMAP-Rule" id="MF_00534"/>
    </source>
</evidence>
<dbReference type="EC" id="6.1.1.22" evidence="1"/>
<dbReference type="EMBL" id="BA000003">
    <property type="protein sequence ID" value="BAB13064.1"/>
    <property type="molecule type" value="Genomic_DNA"/>
</dbReference>
<dbReference type="RefSeq" id="NP_240178.1">
    <property type="nucleotide sequence ID" value="NC_002528.1"/>
</dbReference>
<dbReference type="RefSeq" id="WP_010896085.1">
    <property type="nucleotide sequence ID" value="NC_002528.1"/>
</dbReference>
<dbReference type="SMR" id="P57441"/>
<dbReference type="STRING" id="563178.BUAP5A_353"/>
<dbReference type="EnsemblBacteria" id="BAB13064">
    <property type="protein sequence ID" value="BAB13064"/>
    <property type="gene ID" value="BAB13064"/>
</dbReference>
<dbReference type="KEGG" id="buc:BU360"/>
<dbReference type="PATRIC" id="fig|107806.10.peg.373"/>
<dbReference type="eggNOG" id="COG0017">
    <property type="taxonomic scope" value="Bacteria"/>
</dbReference>
<dbReference type="HOGENOM" id="CLU_004553_2_0_6"/>
<dbReference type="Proteomes" id="UP000001806">
    <property type="component" value="Chromosome"/>
</dbReference>
<dbReference type="GO" id="GO:0005737">
    <property type="term" value="C:cytoplasm"/>
    <property type="evidence" value="ECO:0007669"/>
    <property type="project" value="UniProtKB-SubCell"/>
</dbReference>
<dbReference type="GO" id="GO:0004816">
    <property type="term" value="F:asparagine-tRNA ligase activity"/>
    <property type="evidence" value="ECO:0007669"/>
    <property type="project" value="UniProtKB-UniRule"/>
</dbReference>
<dbReference type="GO" id="GO:0005524">
    <property type="term" value="F:ATP binding"/>
    <property type="evidence" value="ECO:0007669"/>
    <property type="project" value="UniProtKB-UniRule"/>
</dbReference>
<dbReference type="GO" id="GO:0003676">
    <property type="term" value="F:nucleic acid binding"/>
    <property type="evidence" value="ECO:0007669"/>
    <property type="project" value="InterPro"/>
</dbReference>
<dbReference type="GO" id="GO:0006421">
    <property type="term" value="P:asparaginyl-tRNA aminoacylation"/>
    <property type="evidence" value="ECO:0007669"/>
    <property type="project" value="UniProtKB-UniRule"/>
</dbReference>
<dbReference type="CDD" id="cd00776">
    <property type="entry name" value="AsxRS_core"/>
    <property type="match status" value="1"/>
</dbReference>
<dbReference type="CDD" id="cd04318">
    <property type="entry name" value="EcAsnRS_like_N"/>
    <property type="match status" value="1"/>
</dbReference>
<dbReference type="FunFam" id="3.30.930.10:FF:000016">
    <property type="entry name" value="Asparagine--tRNA ligase"/>
    <property type="match status" value="1"/>
</dbReference>
<dbReference type="Gene3D" id="3.30.930.10">
    <property type="entry name" value="Bira Bifunctional Protein, Domain 2"/>
    <property type="match status" value="1"/>
</dbReference>
<dbReference type="Gene3D" id="2.40.50.140">
    <property type="entry name" value="Nucleic acid-binding proteins"/>
    <property type="match status" value="1"/>
</dbReference>
<dbReference type="HAMAP" id="MF_00534">
    <property type="entry name" value="Asn_tRNA_synth"/>
    <property type="match status" value="1"/>
</dbReference>
<dbReference type="InterPro" id="IPR004364">
    <property type="entry name" value="Aa-tRNA-synt_II"/>
</dbReference>
<dbReference type="InterPro" id="IPR006195">
    <property type="entry name" value="aa-tRNA-synth_II"/>
</dbReference>
<dbReference type="InterPro" id="IPR045864">
    <property type="entry name" value="aa-tRNA-synth_II/BPL/LPL"/>
</dbReference>
<dbReference type="InterPro" id="IPR004522">
    <property type="entry name" value="Asn-tRNA-ligase"/>
</dbReference>
<dbReference type="InterPro" id="IPR002312">
    <property type="entry name" value="Asp/Asn-tRNA-synth_IIb"/>
</dbReference>
<dbReference type="InterPro" id="IPR012340">
    <property type="entry name" value="NA-bd_OB-fold"/>
</dbReference>
<dbReference type="InterPro" id="IPR004365">
    <property type="entry name" value="NA-bd_OB_tRNA"/>
</dbReference>
<dbReference type="NCBIfam" id="TIGR00457">
    <property type="entry name" value="asnS"/>
    <property type="match status" value="1"/>
</dbReference>
<dbReference type="NCBIfam" id="NF003037">
    <property type="entry name" value="PRK03932.1"/>
    <property type="match status" value="1"/>
</dbReference>
<dbReference type="PANTHER" id="PTHR22594:SF34">
    <property type="entry name" value="ASPARAGINE--TRNA LIGASE, MITOCHONDRIAL-RELATED"/>
    <property type="match status" value="1"/>
</dbReference>
<dbReference type="PANTHER" id="PTHR22594">
    <property type="entry name" value="ASPARTYL/LYSYL-TRNA SYNTHETASE"/>
    <property type="match status" value="1"/>
</dbReference>
<dbReference type="Pfam" id="PF00152">
    <property type="entry name" value="tRNA-synt_2"/>
    <property type="match status" value="1"/>
</dbReference>
<dbReference type="Pfam" id="PF01336">
    <property type="entry name" value="tRNA_anti-codon"/>
    <property type="match status" value="1"/>
</dbReference>
<dbReference type="PRINTS" id="PR01042">
    <property type="entry name" value="TRNASYNTHASP"/>
</dbReference>
<dbReference type="SUPFAM" id="SSF55681">
    <property type="entry name" value="Class II aaRS and biotin synthetases"/>
    <property type="match status" value="1"/>
</dbReference>
<dbReference type="SUPFAM" id="SSF50249">
    <property type="entry name" value="Nucleic acid-binding proteins"/>
    <property type="match status" value="1"/>
</dbReference>
<dbReference type="PROSITE" id="PS50862">
    <property type="entry name" value="AA_TRNA_LIGASE_II"/>
    <property type="match status" value="1"/>
</dbReference>
<organism>
    <name type="scientific">Buchnera aphidicola subsp. Acyrthosiphon pisum (strain APS)</name>
    <name type="common">Acyrthosiphon pisum symbiotic bacterium</name>
    <dbReference type="NCBI Taxonomy" id="107806"/>
    <lineage>
        <taxon>Bacteria</taxon>
        <taxon>Pseudomonadati</taxon>
        <taxon>Pseudomonadota</taxon>
        <taxon>Gammaproteobacteria</taxon>
        <taxon>Enterobacterales</taxon>
        <taxon>Erwiniaceae</taxon>
        <taxon>Buchnera</taxon>
    </lineage>
</organism>
<proteinExistence type="inferred from homology"/>
<keyword id="KW-0030">Aminoacyl-tRNA synthetase</keyword>
<keyword id="KW-0067">ATP-binding</keyword>
<keyword id="KW-0963">Cytoplasm</keyword>
<keyword id="KW-0436">Ligase</keyword>
<keyword id="KW-0547">Nucleotide-binding</keyword>
<keyword id="KW-0648">Protein biosynthesis</keyword>
<keyword id="KW-1185">Reference proteome</keyword>
<comment type="catalytic activity">
    <reaction evidence="1">
        <text>tRNA(Asn) + L-asparagine + ATP = L-asparaginyl-tRNA(Asn) + AMP + diphosphate + H(+)</text>
        <dbReference type="Rhea" id="RHEA:11180"/>
        <dbReference type="Rhea" id="RHEA-COMP:9659"/>
        <dbReference type="Rhea" id="RHEA-COMP:9674"/>
        <dbReference type="ChEBI" id="CHEBI:15378"/>
        <dbReference type="ChEBI" id="CHEBI:30616"/>
        <dbReference type="ChEBI" id="CHEBI:33019"/>
        <dbReference type="ChEBI" id="CHEBI:58048"/>
        <dbReference type="ChEBI" id="CHEBI:78442"/>
        <dbReference type="ChEBI" id="CHEBI:78515"/>
        <dbReference type="ChEBI" id="CHEBI:456215"/>
        <dbReference type="EC" id="6.1.1.22"/>
    </reaction>
</comment>
<comment type="subunit">
    <text evidence="1">Homodimer.</text>
</comment>
<comment type="subcellular location">
    <subcellularLocation>
        <location evidence="1">Cytoplasm</location>
    </subcellularLocation>
</comment>
<comment type="similarity">
    <text evidence="1">Belongs to the class-II aminoacyl-tRNA synthetase family.</text>
</comment>
<protein>
    <recommendedName>
        <fullName evidence="1">Asparagine--tRNA ligase</fullName>
        <ecNumber evidence="1">6.1.1.22</ecNumber>
    </recommendedName>
    <alternativeName>
        <fullName evidence="1">Asparaginyl-tRNA synthetase</fullName>
        <shortName evidence="1">AsnRS</shortName>
    </alternativeName>
</protein>
<name>SYN_BUCAI</name>